<gene>
    <name evidence="1" type="primary">pyrC</name>
    <name type="ordered locus">LL1069</name>
    <name type="ORF">L81189</name>
</gene>
<accession>Q9CGM7</accession>
<proteinExistence type="inferred from homology"/>
<organism>
    <name type="scientific">Lactococcus lactis subsp. lactis (strain IL1403)</name>
    <name type="common">Streptococcus lactis</name>
    <dbReference type="NCBI Taxonomy" id="272623"/>
    <lineage>
        <taxon>Bacteria</taxon>
        <taxon>Bacillati</taxon>
        <taxon>Bacillota</taxon>
        <taxon>Bacilli</taxon>
        <taxon>Lactobacillales</taxon>
        <taxon>Streptococcaceae</taxon>
        <taxon>Lactococcus</taxon>
    </lineage>
</organism>
<reference key="1">
    <citation type="journal article" date="2001" name="Genome Res.">
        <title>The complete genome sequence of the lactic acid bacterium Lactococcus lactis ssp. lactis IL1403.</title>
        <authorList>
            <person name="Bolotin A."/>
            <person name="Wincker P."/>
            <person name="Mauger S."/>
            <person name="Jaillon O."/>
            <person name="Malarme K."/>
            <person name="Weissenbach J."/>
            <person name="Ehrlich S.D."/>
            <person name="Sorokin A."/>
        </authorList>
    </citation>
    <scope>NUCLEOTIDE SEQUENCE [LARGE SCALE GENOMIC DNA]</scope>
    <source>
        <strain>IL1403</strain>
    </source>
</reference>
<evidence type="ECO:0000255" key="1">
    <source>
        <dbReference type="HAMAP-Rule" id="MF_00220"/>
    </source>
</evidence>
<evidence type="ECO:0000305" key="2"/>
<feature type="chain" id="PRO_0000147235" description="Dihydroorotase">
    <location>
        <begin position="1"/>
        <end position="423"/>
    </location>
</feature>
<feature type="active site" evidence="1">
    <location>
        <position position="304"/>
    </location>
</feature>
<feature type="binding site" evidence="1">
    <location>
        <position position="60"/>
    </location>
    <ligand>
        <name>Zn(2+)</name>
        <dbReference type="ChEBI" id="CHEBI:29105"/>
        <label>1</label>
    </ligand>
</feature>
<feature type="binding site" evidence="1">
    <location>
        <begin position="62"/>
        <end position="64"/>
    </location>
    <ligand>
        <name>substrate</name>
    </ligand>
</feature>
<feature type="binding site" evidence="1">
    <location>
        <position position="62"/>
    </location>
    <ligand>
        <name>Zn(2+)</name>
        <dbReference type="ChEBI" id="CHEBI:29105"/>
        <label>1</label>
    </ligand>
</feature>
<feature type="binding site" evidence="1">
    <location>
        <position position="94"/>
    </location>
    <ligand>
        <name>substrate</name>
    </ligand>
</feature>
<feature type="binding site" evidence="1">
    <location>
        <position position="151"/>
    </location>
    <ligand>
        <name>Zn(2+)</name>
        <dbReference type="ChEBI" id="CHEBI:29105"/>
        <label>1</label>
    </ligand>
</feature>
<feature type="binding site" evidence="1">
    <location>
        <position position="151"/>
    </location>
    <ligand>
        <name>Zn(2+)</name>
        <dbReference type="ChEBI" id="CHEBI:29105"/>
        <label>2</label>
    </ligand>
</feature>
<feature type="binding site" evidence="1">
    <location>
        <position position="178"/>
    </location>
    <ligand>
        <name>Zn(2+)</name>
        <dbReference type="ChEBI" id="CHEBI:29105"/>
        <label>2</label>
    </ligand>
</feature>
<feature type="binding site" evidence="1">
    <location>
        <position position="231"/>
    </location>
    <ligand>
        <name>Zn(2+)</name>
        <dbReference type="ChEBI" id="CHEBI:29105"/>
        <label>2</label>
    </ligand>
</feature>
<feature type="binding site" evidence="1">
    <location>
        <position position="277"/>
    </location>
    <ligand>
        <name>substrate</name>
    </ligand>
</feature>
<feature type="binding site" evidence="1">
    <location>
        <position position="304"/>
    </location>
    <ligand>
        <name>Zn(2+)</name>
        <dbReference type="ChEBI" id="CHEBI:29105"/>
        <label>1</label>
    </ligand>
</feature>
<feature type="binding site" evidence="1">
    <location>
        <position position="308"/>
    </location>
    <ligand>
        <name>substrate</name>
    </ligand>
</feature>
<name>PYRC_LACLA</name>
<dbReference type="EC" id="3.5.2.3" evidence="1"/>
<dbReference type="EMBL" id="AE005176">
    <property type="protein sequence ID" value="AAK05167.1"/>
    <property type="status" value="ALT_INIT"/>
    <property type="molecule type" value="Genomic_DNA"/>
</dbReference>
<dbReference type="PIR" id="E86758">
    <property type="entry name" value="E86758"/>
</dbReference>
<dbReference type="RefSeq" id="NP_267225.1">
    <property type="nucleotide sequence ID" value="NC_002662.1"/>
</dbReference>
<dbReference type="RefSeq" id="WP_031296484.1">
    <property type="nucleotide sequence ID" value="NC_002662.1"/>
</dbReference>
<dbReference type="SMR" id="Q9CGM7"/>
<dbReference type="PaxDb" id="272623-L81189"/>
<dbReference type="EnsemblBacteria" id="AAK05167">
    <property type="protein sequence ID" value="AAK05167"/>
    <property type="gene ID" value="L81189"/>
</dbReference>
<dbReference type="KEGG" id="lla:L81189"/>
<dbReference type="PATRIC" id="fig|272623.7.peg.1146"/>
<dbReference type="eggNOG" id="COG0044">
    <property type="taxonomic scope" value="Bacteria"/>
</dbReference>
<dbReference type="HOGENOM" id="CLU_015572_1_0_9"/>
<dbReference type="OrthoDB" id="9765462at2"/>
<dbReference type="UniPathway" id="UPA00070">
    <property type="reaction ID" value="UER00117"/>
</dbReference>
<dbReference type="Proteomes" id="UP000002196">
    <property type="component" value="Chromosome"/>
</dbReference>
<dbReference type="GO" id="GO:0005737">
    <property type="term" value="C:cytoplasm"/>
    <property type="evidence" value="ECO:0007669"/>
    <property type="project" value="TreeGrafter"/>
</dbReference>
<dbReference type="GO" id="GO:0004038">
    <property type="term" value="F:allantoinase activity"/>
    <property type="evidence" value="ECO:0007669"/>
    <property type="project" value="TreeGrafter"/>
</dbReference>
<dbReference type="GO" id="GO:0004151">
    <property type="term" value="F:dihydroorotase activity"/>
    <property type="evidence" value="ECO:0007669"/>
    <property type="project" value="UniProtKB-UniRule"/>
</dbReference>
<dbReference type="GO" id="GO:0008270">
    <property type="term" value="F:zinc ion binding"/>
    <property type="evidence" value="ECO:0007669"/>
    <property type="project" value="UniProtKB-UniRule"/>
</dbReference>
<dbReference type="GO" id="GO:0044205">
    <property type="term" value="P:'de novo' UMP biosynthetic process"/>
    <property type="evidence" value="ECO:0007669"/>
    <property type="project" value="UniProtKB-UniRule"/>
</dbReference>
<dbReference type="GO" id="GO:0006145">
    <property type="term" value="P:purine nucleobase catabolic process"/>
    <property type="evidence" value="ECO:0007669"/>
    <property type="project" value="TreeGrafter"/>
</dbReference>
<dbReference type="CDD" id="cd01317">
    <property type="entry name" value="DHOase_IIa"/>
    <property type="match status" value="1"/>
</dbReference>
<dbReference type="Gene3D" id="3.20.20.140">
    <property type="entry name" value="Metal-dependent hydrolases"/>
    <property type="match status" value="1"/>
</dbReference>
<dbReference type="HAMAP" id="MF_00220_B">
    <property type="entry name" value="PyrC_classI_B"/>
    <property type="match status" value="1"/>
</dbReference>
<dbReference type="InterPro" id="IPR006680">
    <property type="entry name" value="Amidohydro-rel"/>
</dbReference>
<dbReference type="InterPro" id="IPR004722">
    <property type="entry name" value="DHOase"/>
</dbReference>
<dbReference type="InterPro" id="IPR050138">
    <property type="entry name" value="DHOase/Allantoinase_Hydrolase"/>
</dbReference>
<dbReference type="InterPro" id="IPR002195">
    <property type="entry name" value="Dihydroorotase_CS"/>
</dbReference>
<dbReference type="InterPro" id="IPR011059">
    <property type="entry name" value="Metal-dep_hydrolase_composite"/>
</dbReference>
<dbReference type="InterPro" id="IPR032466">
    <property type="entry name" value="Metal_Hydrolase"/>
</dbReference>
<dbReference type="NCBIfam" id="NF006839">
    <property type="entry name" value="PRK09357.1-4"/>
    <property type="match status" value="1"/>
</dbReference>
<dbReference type="NCBIfam" id="TIGR00857">
    <property type="entry name" value="pyrC_multi"/>
    <property type="match status" value="1"/>
</dbReference>
<dbReference type="PANTHER" id="PTHR43668">
    <property type="entry name" value="ALLANTOINASE"/>
    <property type="match status" value="1"/>
</dbReference>
<dbReference type="PANTHER" id="PTHR43668:SF2">
    <property type="entry name" value="ALLANTOINASE"/>
    <property type="match status" value="1"/>
</dbReference>
<dbReference type="Pfam" id="PF01979">
    <property type="entry name" value="Amidohydro_1"/>
    <property type="match status" value="1"/>
</dbReference>
<dbReference type="SUPFAM" id="SSF51338">
    <property type="entry name" value="Composite domain of metallo-dependent hydrolases"/>
    <property type="match status" value="1"/>
</dbReference>
<dbReference type="SUPFAM" id="SSF51556">
    <property type="entry name" value="Metallo-dependent hydrolases"/>
    <property type="match status" value="1"/>
</dbReference>
<dbReference type="PROSITE" id="PS00482">
    <property type="entry name" value="DIHYDROOROTASE_1"/>
    <property type="match status" value="1"/>
</dbReference>
<dbReference type="PROSITE" id="PS00483">
    <property type="entry name" value="DIHYDROOROTASE_2"/>
    <property type="match status" value="1"/>
</dbReference>
<sequence>MTLLIKNGRLVDPKSNRDEVLDILIENDKIVKIGLNLSVENAEIVDARGLVVAPGLIDVHVHFREPGQTHKETIHSGAKSAAAGGFTRVVMMANTKPILSTPKVLTETLEIADKEDIKIDAVGSITQDFDGEHLTDFDELIKAGAIGFSDDGIPLTDAGVLRKALQKAKLTDSLISIHEEDPNLIGTLGVNDGEVAHKCGFTGAPTVSEYSMMARDSMIAYETGARLHIQHLSAGESVEVVRFAKNLGAKITAEVTPQHFSITEQMIFEQGTNAKLNPPLRSTTDIGKIIEGLKDGTIDVIATDHAPHTREEKNVSLDKAPSGMIGLETSLQLGLTNLVAKGHLTLSELLTKMTVNPAKLYNFDAGYLAENGPADLVIFDAENDYQVGETFDSKATNSPFIKQKVQGQVKYTICDGKIVYQAK</sequence>
<protein>
    <recommendedName>
        <fullName evidence="1">Dihydroorotase</fullName>
        <shortName evidence="1">DHOase</shortName>
        <ecNumber evidence="1">3.5.2.3</ecNumber>
    </recommendedName>
</protein>
<keyword id="KW-0378">Hydrolase</keyword>
<keyword id="KW-0479">Metal-binding</keyword>
<keyword id="KW-0665">Pyrimidine biosynthesis</keyword>
<keyword id="KW-1185">Reference proteome</keyword>
<keyword id="KW-0862">Zinc</keyword>
<comment type="function">
    <text evidence="1">Catalyzes the reversible cyclization of carbamoyl aspartate to dihydroorotate.</text>
</comment>
<comment type="catalytic activity">
    <reaction evidence="1">
        <text>(S)-dihydroorotate + H2O = N-carbamoyl-L-aspartate + H(+)</text>
        <dbReference type="Rhea" id="RHEA:24296"/>
        <dbReference type="ChEBI" id="CHEBI:15377"/>
        <dbReference type="ChEBI" id="CHEBI:15378"/>
        <dbReference type="ChEBI" id="CHEBI:30864"/>
        <dbReference type="ChEBI" id="CHEBI:32814"/>
        <dbReference type="EC" id="3.5.2.3"/>
    </reaction>
</comment>
<comment type="cofactor">
    <cofactor evidence="1">
        <name>Zn(2+)</name>
        <dbReference type="ChEBI" id="CHEBI:29105"/>
    </cofactor>
    <text evidence="1">Binds 2 Zn(2+) ions per subunit.</text>
</comment>
<comment type="pathway">
    <text evidence="1">Pyrimidine metabolism; UMP biosynthesis via de novo pathway; (S)-dihydroorotate from bicarbonate: step 3/3.</text>
</comment>
<comment type="similarity">
    <text evidence="1">Belongs to the metallo-dependent hydrolases superfamily. DHOase family. Class I DHOase subfamily.</text>
</comment>
<comment type="sequence caution" evidence="2">
    <conflict type="erroneous initiation">
        <sequence resource="EMBL-CDS" id="AAK05167"/>
    </conflict>
</comment>